<protein>
    <recommendedName>
        <fullName evidence="1">Probable transcriptional regulatory protein Tpet_0454</fullName>
    </recommendedName>
</protein>
<sequence>MSGHNKWANIKHRKMAQDAKKSKIFTKLIREIIVAAREGGGNIETNPRLRAAVEKARAENMPKENIERAIKRGTGELEGVDYQEVIYEGYAPGGVAVYIRALTDNKNRTAQELRHLFNKYGGSLAESGSVSWIFERKGVIEIPRDKVKDLEELMMIAIDAGAEDIKDTEDPIQIITTPENLSEVKSKLEEAGYEVEAKVTFIPKNTMKVTGKDAEKVLEFLNALEDMDDVQEVYSNFEMDDKEMEEILSRLEG</sequence>
<evidence type="ECO:0000255" key="1">
    <source>
        <dbReference type="HAMAP-Rule" id="MF_00693"/>
    </source>
</evidence>
<organism>
    <name type="scientific">Thermotoga petrophila (strain ATCC BAA-488 / DSM 13995 / JCM 10881 / RKU-1)</name>
    <dbReference type="NCBI Taxonomy" id="390874"/>
    <lineage>
        <taxon>Bacteria</taxon>
        <taxon>Thermotogati</taxon>
        <taxon>Thermotogota</taxon>
        <taxon>Thermotogae</taxon>
        <taxon>Thermotogales</taxon>
        <taxon>Thermotogaceae</taxon>
        <taxon>Thermotoga</taxon>
    </lineage>
</organism>
<name>Y454_THEP1</name>
<reference key="1">
    <citation type="submission" date="2007-05" db="EMBL/GenBank/DDBJ databases">
        <title>Complete sequence of Thermotoga petrophila RKU-1.</title>
        <authorList>
            <consortium name="US DOE Joint Genome Institute"/>
            <person name="Copeland A."/>
            <person name="Lucas S."/>
            <person name="Lapidus A."/>
            <person name="Barry K."/>
            <person name="Glavina del Rio T."/>
            <person name="Dalin E."/>
            <person name="Tice H."/>
            <person name="Pitluck S."/>
            <person name="Sims D."/>
            <person name="Brettin T."/>
            <person name="Bruce D."/>
            <person name="Detter J.C."/>
            <person name="Han C."/>
            <person name="Tapia R."/>
            <person name="Schmutz J."/>
            <person name="Larimer F."/>
            <person name="Land M."/>
            <person name="Hauser L."/>
            <person name="Kyrpides N."/>
            <person name="Mikhailova N."/>
            <person name="Nelson K."/>
            <person name="Gogarten J.P."/>
            <person name="Noll K."/>
            <person name="Richardson P."/>
        </authorList>
    </citation>
    <scope>NUCLEOTIDE SEQUENCE [LARGE SCALE GENOMIC DNA]</scope>
    <source>
        <strain>ATCC BAA-488 / DSM 13995 / JCM 10881 / RKU-1</strain>
    </source>
</reference>
<gene>
    <name type="ordered locus">Tpet_0454</name>
</gene>
<feature type="chain" id="PRO_1000045388" description="Probable transcriptional regulatory protein Tpet_0454">
    <location>
        <begin position="1"/>
        <end position="253"/>
    </location>
</feature>
<proteinExistence type="inferred from homology"/>
<dbReference type="EMBL" id="CP000702">
    <property type="protein sequence ID" value="ABQ46478.1"/>
    <property type="molecule type" value="Genomic_DNA"/>
</dbReference>
<dbReference type="RefSeq" id="WP_011943096.1">
    <property type="nucleotide sequence ID" value="NC_009486.1"/>
</dbReference>
<dbReference type="SMR" id="A5IJV5"/>
<dbReference type="STRING" id="390874.Tpet_0454"/>
<dbReference type="KEGG" id="tpt:Tpet_0454"/>
<dbReference type="eggNOG" id="COG0217">
    <property type="taxonomic scope" value="Bacteria"/>
</dbReference>
<dbReference type="HOGENOM" id="CLU_062974_2_2_0"/>
<dbReference type="Proteomes" id="UP000006558">
    <property type="component" value="Chromosome"/>
</dbReference>
<dbReference type="GO" id="GO:0005829">
    <property type="term" value="C:cytosol"/>
    <property type="evidence" value="ECO:0007669"/>
    <property type="project" value="TreeGrafter"/>
</dbReference>
<dbReference type="GO" id="GO:0003677">
    <property type="term" value="F:DNA binding"/>
    <property type="evidence" value="ECO:0007669"/>
    <property type="project" value="UniProtKB-UniRule"/>
</dbReference>
<dbReference type="GO" id="GO:0006355">
    <property type="term" value="P:regulation of DNA-templated transcription"/>
    <property type="evidence" value="ECO:0007669"/>
    <property type="project" value="UniProtKB-UniRule"/>
</dbReference>
<dbReference type="FunFam" id="1.10.10.200:FF:000001">
    <property type="entry name" value="Probable transcriptional regulatory protein YebC"/>
    <property type="match status" value="1"/>
</dbReference>
<dbReference type="FunFam" id="3.30.70.980:FF:000002">
    <property type="entry name" value="Probable transcriptional regulatory protein YebC"/>
    <property type="match status" value="1"/>
</dbReference>
<dbReference type="Gene3D" id="1.10.10.200">
    <property type="match status" value="1"/>
</dbReference>
<dbReference type="Gene3D" id="3.30.70.980">
    <property type="match status" value="2"/>
</dbReference>
<dbReference type="HAMAP" id="MF_00693">
    <property type="entry name" value="Transcrip_reg_TACO1"/>
    <property type="match status" value="1"/>
</dbReference>
<dbReference type="InterPro" id="IPR017856">
    <property type="entry name" value="Integrase-like_N"/>
</dbReference>
<dbReference type="InterPro" id="IPR048300">
    <property type="entry name" value="TACO1_YebC-like_2nd/3rd_dom"/>
</dbReference>
<dbReference type="InterPro" id="IPR049083">
    <property type="entry name" value="TACO1_YebC_N"/>
</dbReference>
<dbReference type="InterPro" id="IPR002876">
    <property type="entry name" value="Transcrip_reg_TACO1-like"/>
</dbReference>
<dbReference type="InterPro" id="IPR026564">
    <property type="entry name" value="Transcrip_reg_TACO1-like_dom3"/>
</dbReference>
<dbReference type="InterPro" id="IPR029072">
    <property type="entry name" value="YebC-like"/>
</dbReference>
<dbReference type="NCBIfam" id="NF001030">
    <property type="entry name" value="PRK00110.1"/>
    <property type="match status" value="1"/>
</dbReference>
<dbReference type="NCBIfam" id="NF009044">
    <property type="entry name" value="PRK12378.1"/>
    <property type="match status" value="1"/>
</dbReference>
<dbReference type="NCBIfam" id="TIGR01033">
    <property type="entry name" value="YebC/PmpR family DNA-binding transcriptional regulator"/>
    <property type="match status" value="1"/>
</dbReference>
<dbReference type="PANTHER" id="PTHR12532:SF6">
    <property type="entry name" value="TRANSCRIPTIONAL REGULATORY PROTEIN YEBC-RELATED"/>
    <property type="match status" value="1"/>
</dbReference>
<dbReference type="PANTHER" id="PTHR12532">
    <property type="entry name" value="TRANSLATIONAL ACTIVATOR OF CYTOCHROME C OXIDASE 1"/>
    <property type="match status" value="1"/>
</dbReference>
<dbReference type="Pfam" id="PF20772">
    <property type="entry name" value="TACO1_YebC_N"/>
    <property type="match status" value="1"/>
</dbReference>
<dbReference type="Pfam" id="PF01709">
    <property type="entry name" value="Transcrip_reg"/>
    <property type="match status" value="1"/>
</dbReference>
<dbReference type="SUPFAM" id="SSF75625">
    <property type="entry name" value="YebC-like"/>
    <property type="match status" value="1"/>
</dbReference>
<comment type="subcellular location">
    <subcellularLocation>
        <location evidence="1">Cytoplasm</location>
    </subcellularLocation>
</comment>
<comment type="similarity">
    <text evidence="1">Belongs to the TACO1 family.</text>
</comment>
<keyword id="KW-0963">Cytoplasm</keyword>
<keyword id="KW-0238">DNA-binding</keyword>
<keyword id="KW-0804">Transcription</keyword>
<keyword id="KW-0805">Transcription regulation</keyword>
<accession>A5IJV5</accession>